<keyword id="KW-0067">ATP-binding</keyword>
<keyword id="KW-0963">Cytoplasm</keyword>
<keyword id="KW-0324">Glycolysis</keyword>
<keyword id="KW-0418">Kinase</keyword>
<keyword id="KW-0547">Nucleotide-binding</keyword>
<keyword id="KW-0808">Transferase</keyword>
<name>GLK_CAUSK</name>
<organism>
    <name type="scientific">Caulobacter sp. (strain K31)</name>
    <dbReference type="NCBI Taxonomy" id="366602"/>
    <lineage>
        <taxon>Bacteria</taxon>
        <taxon>Pseudomonadati</taxon>
        <taxon>Pseudomonadota</taxon>
        <taxon>Alphaproteobacteria</taxon>
        <taxon>Caulobacterales</taxon>
        <taxon>Caulobacteraceae</taxon>
        <taxon>Caulobacter</taxon>
    </lineage>
</organism>
<dbReference type="EC" id="2.7.1.2" evidence="1"/>
<dbReference type="EMBL" id="CP000927">
    <property type="protein sequence ID" value="ABZ70571.1"/>
    <property type="molecule type" value="Genomic_DNA"/>
</dbReference>
<dbReference type="SMR" id="B0T0C5"/>
<dbReference type="STRING" id="366602.Caul_1441"/>
<dbReference type="KEGG" id="cak:Caul_1441"/>
<dbReference type="eggNOG" id="COG0837">
    <property type="taxonomic scope" value="Bacteria"/>
</dbReference>
<dbReference type="HOGENOM" id="CLU_042582_1_0_5"/>
<dbReference type="OrthoDB" id="9800595at2"/>
<dbReference type="GO" id="GO:0005829">
    <property type="term" value="C:cytosol"/>
    <property type="evidence" value="ECO:0007669"/>
    <property type="project" value="TreeGrafter"/>
</dbReference>
<dbReference type="GO" id="GO:0005524">
    <property type="term" value="F:ATP binding"/>
    <property type="evidence" value="ECO:0007669"/>
    <property type="project" value="UniProtKB-UniRule"/>
</dbReference>
<dbReference type="GO" id="GO:0005536">
    <property type="term" value="F:D-glucose binding"/>
    <property type="evidence" value="ECO:0007669"/>
    <property type="project" value="InterPro"/>
</dbReference>
<dbReference type="GO" id="GO:0004340">
    <property type="term" value="F:glucokinase activity"/>
    <property type="evidence" value="ECO:0007669"/>
    <property type="project" value="UniProtKB-UniRule"/>
</dbReference>
<dbReference type="GO" id="GO:0006096">
    <property type="term" value="P:glycolytic process"/>
    <property type="evidence" value="ECO:0007669"/>
    <property type="project" value="UniProtKB-UniRule"/>
</dbReference>
<dbReference type="CDD" id="cd24008">
    <property type="entry name" value="ASKHA_NBD_GLK"/>
    <property type="match status" value="1"/>
</dbReference>
<dbReference type="Gene3D" id="3.30.420.40">
    <property type="match status" value="1"/>
</dbReference>
<dbReference type="Gene3D" id="3.40.367.20">
    <property type="match status" value="1"/>
</dbReference>
<dbReference type="HAMAP" id="MF_00524">
    <property type="entry name" value="Glucokinase"/>
    <property type="match status" value="1"/>
</dbReference>
<dbReference type="InterPro" id="IPR043129">
    <property type="entry name" value="ATPase_NBD"/>
</dbReference>
<dbReference type="InterPro" id="IPR050201">
    <property type="entry name" value="Bacterial_glucokinase"/>
</dbReference>
<dbReference type="InterPro" id="IPR003836">
    <property type="entry name" value="Glucokinase"/>
</dbReference>
<dbReference type="NCBIfam" id="TIGR00749">
    <property type="entry name" value="glk"/>
    <property type="match status" value="1"/>
</dbReference>
<dbReference type="PANTHER" id="PTHR47690">
    <property type="entry name" value="GLUCOKINASE"/>
    <property type="match status" value="1"/>
</dbReference>
<dbReference type="PANTHER" id="PTHR47690:SF1">
    <property type="entry name" value="GLUCOKINASE"/>
    <property type="match status" value="1"/>
</dbReference>
<dbReference type="Pfam" id="PF02685">
    <property type="entry name" value="Glucokinase"/>
    <property type="match status" value="1"/>
</dbReference>
<dbReference type="SUPFAM" id="SSF53067">
    <property type="entry name" value="Actin-like ATPase domain"/>
    <property type="match status" value="1"/>
</dbReference>
<gene>
    <name evidence="1" type="primary">glk</name>
    <name type="ordered locus">Caul_1441</name>
</gene>
<reference key="1">
    <citation type="submission" date="2008-01" db="EMBL/GenBank/DDBJ databases">
        <title>Complete sequence of chromosome of Caulobacter sp. K31.</title>
        <authorList>
            <consortium name="US DOE Joint Genome Institute"/>
            <person name="Copeland A."/>
            <person name="Lucas S."/>
            <person name="Lapidus A."/>
            <person name="Barry K."/>
            <person name="Glavina del Rio T."/>
            <person name="Dalin E."/>
            <person name="Tice H."/>
            <person name="Pitluck S."/>
            <person name="Bruce D."/>
            <person name="Goodwin L."/>
            <person name="Thompson L.S."/>
            <person name="Brettin T."/>
            <person name="Detter J.C."/>
            <person name="Han C."/>
            <person name="Schmutz J."/>
            <person name="Larimer F."/>
            <person name="Land M."/>
            <person name="Hauser L."/>
            <person name="Kyrpides N."/>
            <person name="Kim E."/>
            <person name="Stephens C."/>
            <person name="Richardson P."/>
        </authorList>
    </citation>
    <scope>NUCLEOTIDE SEQUENCE [LARGE SCALE GENOMIC DNA]</scope>
    <source>
        <strain>K31</strain>
    </source>
</reference>
<accession>B0T0C5</accession>
<evidence type="ECO:0000255" key="1">
    <source>
        <dbReference type="HAMAP-Rule" id="MF_00524"/>
    </source>
</evidence>
<feature type="chain" id="PRO_1000081694" description="Glucokinase">
    <location>
        <begin position="1"/>
        <end position="329"/>
    </location>
</feature>
<feature type="binding site" evidence="1">
    <location>
        <begin position="13"/>
        <end position="18"/>
    </location>
    <ligand>
        <name>ATP</name>
        <dbReference type="ChEBI" id="CHEBI:30616"/>
    </ligand>
</feature>
<comment type="catalytic activity">
    <reaction evidence="1">
        <text>D-glucose + ATP = D-glucose 6-phosphate + ADP + H(+)</text>
        <dbReference type="Rhea" id="RHEA:17825"/>
        <dbReference type="ChEBI" id="CHEBI:4167"/>
        <dbReference type="ChEBI" id="CHEBI:15378"/>
        <dbReference type="ChEBI" id="CHEBI:30616"/>
        <dbReference type="ChEBI" id="CHEBI:61548"/>
        <dbReference type="ChEBI" id="CHEBI:456216"/>
        <dbReference type="EC" id="2.7.1.2"/>
    </reaction>
</comment>
<comment type="subcellular location">
    <subcellularLocation>
        <location evidence="1">Cytoplasm</location>
    </subcellularLocation>
</comment>
<comment type="similarity">
    <text evidence="1">Belongs to the bacterial glucokinase family.</text>
</comment>
<proteinExistence type="inferred from homology"/>
<sequence length="329" mass="34696">MSGLNSIGLGLVGDIGGTNARFALVDFDGADPQLIEPTSYKGEDYGTAEDAIEHYLAKMGLKHPDQAVVAVAGPIEHGAVHFTNSDWKLSEDSLRRAGGFRTARLINDFTAQALAAPRLAPKDLRQIGPLQTSGEGDLAILGPGTGFGAAGMVRRHGVETPLTTEGGHIAFAPFDDTEIEILRVLIKRFGRCSIERLLSGPGMEDLHVILGEIEGRKVDELTAKQITEHAVAGDDCCKVTIERFCAILGSAAGDLALALGARGGVFIAGGIAPRIVDLLEEGEFRARFEAKGRLSDYTRAIPTHVVMNPHTALIGAAVAMTPDGRAAIS</sequence>
<protein>
    <recommendedName>
        <fullName evidence="1">Glucokinase</fullName>
        <ecNumber evidence="1">2.7.1.2</ecNumber>
    </recommendedName>
    <alternativeName>
        <fullName evidence="1">Glucose kinase</fullName>
    </alternativeName>
</protein>